<protein>
    <recommendedName>
        <fullName evidence="1">Glutamyl-tRNA reductase</fullName>
        <shortName evidence="1">GluTR</shortName>
        <ecNumber evidence="1">1.2.1.70</ecNumber>
    </recommendedName>
</protein>
<proteinExistence type="inferred from homology"/>
<accession>A9N9K1</accession>
<organism>
    <name type="scientific">Coxiella burnetii (strain RSA 331 / Henzerling II)</name>
    <dbReference type="NCBI Taxonomy" id="360115"/>
    <lineage>
        <taxon>Bacteria</taxon>
        <taxon>Pseudomonadati</taxon>
        <taxon>Pseudomonadota</taxon>
        <taxon>Gammaproteobacteria</taxon>
        <taxon>Legionellales</taxon>
        <taxon>Coxiellaceae</taxon>
        <taxon>Coxiella</taxon>
    </lineage>
</organism>
<reference key="1">
    <citation type="submission" date="2007-11" db="EMBL/GenBank/DDBJ databases">
        <title>Genome sequencing of phylogenetically and phenotypically diverse Coxiella burnetii isolates.</title>
        <authorList>
            <person name="Seshadri R."/>
            <person name="Samuel J.E."/>
        </authorList>
    </citation>
    <scope>NUCLEOTIDE SEQUENCE [LARGE SCALE GENOMIC DNA]</scope>
    <source>
        <strain>RSA 331 / Henzerling II</strain>
    </source>
</reference>
<keyword id="KW-0521">NADP</keyword>
<keyword id="KW-0560">Oxidoreductase</keyword>
<keyword id="KW-0627">Porphyrin biosynthesis</keyword>
<feature type="chain" id="PRO_1000075406" description="Glutamyl-tRNA reductase">
    <location>
        <begin position="1"/>
        <end position="413"/>
    </location>
</feature>
<feature type="active site" description="Nucleophile" evidence="1">
    <location>
        <position position="50"/>
    </location>
</feature>
<feature type="binding site" evidence="1">
    <location>
        <begin position="49"/>
        <end position="52"/>
    </location>
    <ligand>
        <name>substrate</name>
    </ligand>
</feature>
<feature type="binding site" evidence="1">
    <location>
        <position position="105"/>
    </location>
    <ligand>
        <name>substrate</name>
    </ligand>
</feature>
<feature type="binding site" evidence="1">
    <location>
        <begin position="110"/>
        <end position="112"/>
    </location>
    <ligand>
        <name>substrate</name>
    </ligand>
</feature>
<feature type="binding site" evidence="1">
    <location>
        <position position="116"/>
    </location>
    <ligand>
        <name>substrate</name>
    </ligand>
</feature>
<feature type="binding site" evidence="1">
    <location>
        <begin position="185"/>
        <end position="190"/>
    </location>
    <ligand>
        <name>NADP(+)</name>
        <dbReference type="ChEBI" id="CHEBI:58349"/>
    </ligand>
</feature>
<feature type="site" description="Important for activity" evidence="1">
    <location>
        <position position="95"/>
    </location>
</feature>
<dbReference type="EC" id="1.2.1.70" evidence="1"/>
<dbReference type="EMBL" id="CP000890">
    <property type="protein sequence ID" value="ABX78257.1"/>
    <property type="molecule type" value="Genomic_DNA"/>
</dbReference>
<dbReference type="RefSeq" id="WP_005769672.1">
    <property type="nucleotide sequence ID" value="NC_010117.1"/>
</dbReference>
<dbReference type="SMR" id="A9N9K1"/>
<dbReference type="KEGG" id="cbs:COXBURSA331_A0118"/>
<dbReference type="HOGENOM" id="CLU_035113_2_2_6"/>
<dbReference type="UniPathway" id="UPA00251">
    <property type="reaction ID" value="UER00316"/>
</dbReference>
<dbReference type="GO" id="GO:0008883">
    <property type="term" value="F:glutamyl-tRNA reductase activity"/>
    <property type="evidence" value="ECO:0007669"/>
    <property type="project" value="UniProtKB-UniRule"/>
</dbReference>
<dbReference type="GO" id="GO:0050661">
    <property type="term" value="F:NADP binding"/>
    <property type="evidence" value="ECO:0007669"/>
    <property type="project" value="InterPro"/>
</dbReference>
<dbReference type="GO" id="GO:0019353">
    <property type="term" value="P:protoporphyrinogen IX biosynthetic process from glutamate"/>
    <property type="evidence" value="ECO:0007669"/>
    <property type="project" value="TreeGrafter"/>
</dbReference>
<dbReference type="CDD" id="cd05213">
    <property type="entry name" value="NAD_bind_Glutamyl_tRNA_reduct"/>
    <property type="match status" value="1"/>
</dbReference>
<dbReference type="FunFam" id="3.30.460.30:FF:000001">
    <property type="entry name" value="Glutamyl-tRNA reductase"/>
    <property type="match status" value="1"/>
</dbReference>
<dbReference type="FunFam" id="3.40.50.720:FF:000031">
    <property type="entry name" value="Glutamyl-tRNA reductase"/>
    <property type="match status" value="1"/>
</dbReference>
<dbReference type="Gene3D" id="3.30.460.30">
    <property type="entry name" value="Glutamyl-tRNA reductase, N-terminal domain"/>
    <property type="match status" value="1"/>
</dbReference>
<dbReference type="Gene3D" id="3.40.50.720">
    <property type="entry name" value="NAD(P)-binding Rossmann-like Domain"/>
    <property type="match status" value="1"/>
</dbReference>
<dbReference type="HAMAP" id="MF_00087">
    <property type="entry name" value="Glu_tRNA_reductase"/>
    <property type="match status" value="1"/>
</dbReference>
<dbReference type="InterPro" id="IPR000343">
    <property type="entry name" value="4pyrrol_synth_GluRdtase"/>
</dbReference>
<dbReference type="InterPro" id="IPR015896">
    <property type="entry name" value="4pyrrol_synth_GluRdtase_dimer"/>
</dbReference>
<dbReference type="InterPro" id="IPR015895">
    <property type="entry name" value="4pyrrol_synth_GluRdtase_N"/>
</dbReference>
<dbReference type="InterPro" id="IPR018214">
    <property type="entry name" value="GluRdtase_CS"/>
</dbReference>
<dbReference type="InterPro" id="IPR036453">
    <property type="entry name" value="GluRdtase_dimer_dom_sf"/>
</dbReference>
<dbReference type="InterPro" id="IPR036343">
    <property type="entry name" value="GluRdtase_N_sf"/>
</dbReference>
<dbReference type="InterPro" id="IPR036291">
    <property type="entry name" value="NAD(P)-bd_dom_sf"/>
</dbReference>
<dbReference type="InterPro" id="IPR006151">
    <property type="entry name" value="Shikm_DH/Glu-tRNA_Rdtase"/>
</dbReference>
<dbReference type="NCBIfam" id="TIGR01035">
    <property type="entry name" value="hemA"/>
    <property type="match status" value="1"/>
</dbReference>
<dbReference type="PANTHER" id="PTHR43013">
    <property type="entry name" value="GLUTAMYL-TRNA REDUCTASE"/>
    <property type="match status" value="1"/>
</dbReference>
<dbReference type="PANTHER" id="PTHR43013:SF1">
    <property type="entry name" value="GLUTAMYL-TRNA REDUCTASE"/>
    <property type="match status" value="1"/>
</dbReference>
<dbReference type="Pfam" id="PF00745">
    <property type="entry name" value="GlutR_dimer"/>
    <property type="match status" value="1"/>
</dbReference>
<dbReference type="Pfam" id="PF05201">
    <property type="entry name" value="GlutR_N"/>
    <property type="match status" value="1"/>
</dbReference>
<dbReference type="Pfam" id="PF01488">
    <property type="entry name" value="Shikimate_DH"/>
    <property type="match status" value="1"/>
</dbReference>
<dbReference type="PIRSF" id="PIRSF000445">
    <property type="entry name" value="4pyrrol_synth_GluRdtase"/>
    <property type="match status" value="1"/>
</dbReference>
<dbReference type="SUPFAM" id="SSF69742">
    <property type="entry name" value="Glutamyl tRNA-reductase catalytic, N-terminal domain"/>
    <property type="match status" value="1"/>
</dbReference>
<dbReference type="SUPFAM" id="SSF69075">
    <property type="entry name" value="Glutamyl tRNA-reductase dimerization domain"/>
    <property type="match status" value="1"/>
</dbReference>
<dbReference type="SUPFAM" id="SSF51735">
    <property type="entry name" value="NAD(P)-binding Rossmann-fold domains"/>
    <property type="match status" value="1"/>
</dbReference>
<dbReference type="PROSITE" id="PS00747">
    <property type="entry name" value="GLUTR"/>
    <property type="match status" value="1"/>
</dbReference>
<comment type="function">
    <text evidence="1">Catalyzes the NADPH-dependent reduction of glutamyl-tRNA(Glu) to glutamate 1-semialdehyde (GSA).</text>
</comment>
<comment type="catalytic activity">
    <reaction evidence="1">
        <text>(S)-4-amino-5-oxopentanoate + tRNA(Glu) + NADP(+) = L-glutamyl-tRNA(Glu) + NADPH + H(+)</text>
        <dbReference type="Rhea" id="RHEA:12344"/>
        <dbReference type="Rhea" id="RHEA-COMP:9663"/>
        <dbReference type="Rhea" id="RHEA-COMP:9680"/>
        <dbReference type="ChEBI" id="CHEBI:15378"/>
        <dbReference type="ChEBI" id="CHEBI:57501"/>
        <dbReference type="ChEBI" id="CHEBI:57783"/>
        <dbReference type="ChEBI" id="CHEBI:58349"/>
        <dbReference type="ChEBI" id="CHEBI:78442"/>
        <dbReference type="ChEBI" id="CHEBI:78520"/>
        <dbReference type="EC" id="1.2.1.70"/>
    </reaction>
</comment>
<comment type="pathway">
    <text evidence="1">Porphyrin-containing compound metabolism; protoporphyrin-IX biosynthesis; 5-aminolevulinate from L-glutamyl-tRNA(Glu): step 1/2.</text>
</comment>
<comment type="subunit">
    <text evidence="1">Homodimer.</text>
</comment>
<comment type="domain">
    <text evidence="1">Possesses an unusual extended V-shaped dimeric structure with each monomer consisting of three distinct domains arranged along a curved 'spinal' alpha-helix. The N-terminal catalytic domain specifically recognizes the glutamate moiety of the substrate. The second domain is the NADPH-binding domain, and the third C-terminal domain is responsible for dimerization.</text>
</comment>
<comment type="miscellaneous">
    <text evidence="1">During catalysis, the active site Cys acts as a nucleophile attacking the alpha-carbonyl group of tRNA-bound glutamate with the formation of a thioester intermediate between enzyme and glutamate, and the concomitant release of tRNA(Glu). The thioester intermediate is finally reduced by direct hydride transfer from NADPH, to form the product GSA.</text>
</comment>
<comment type="similarity">
    <text evidence="1">Belongs to the glutamyl-tRNA reductase family.</text>
</comment>
<sequence length="413" mass="46586">MPLLVCGINHQSAPLTVREKLVFTPERTPLALQSLLAEKAVNEALLLSTCNRTEIYTTVDEAATILRWLSKQPQLSGIDLRSFCYARRDIEMVRHVMRVGSGLDSMVLGEPQILGQMKQAYLLARRIGAVGSELGRLFPAVFAATKRIRSETAIGANPVSIAYAVVQLAKRIFSHLNQCQILLIGAGETIELVFSHLYNQGARHFFIANRTLTRAKQIAEPYHAQAIRLSDIPTYLPKVDIVISATMSQLPLVGKGAVESALRQRKRRPLFMADLALPRDIEPETAQLEDVYLYNIDDLQTLIAQNRQTREAAAKQAEAMVEMQAIHYMRQLQVHKAGDTIRRFRERVEMLRDQELEKALAHFQRTNDPKAVIAHFAHNLTNKILHQPTTKLRQAAYEDQVQLLLSAKELFDL</sequence>
<evidence type="ECO:0000255" key="1">
    <source>
        <dbReference type="HAMAP-Rule" id="MF_00087"/>
    </source>
</evidence>
<gene>
    <name evidence="1" type="primary">hemA</name>
    <name type="ordered locus">COXBURSA331_A0118</name>
</gene>
<name>HEM1_COXBR</name>